<feature type="chain" id="PRO_0000134557" description="Orotidine 5'-phosphate decarboxylase">
    <location>
        <begin position="1"/>
        <end position="246"/>
    </location>
</feature>
<feature type="active site" description="Proton donor" evidence="1">
    <location>
        <position position="73"/>
    </location>
</feature>
<feature type="binding site" evidence="1">
    <location>
        <position position="22"/>
    </location>
    <ligand>
        <name>substrate</name>
    </ligand>
</feature>
<feature type="binding site" evidence="1">
    <location>
        <position position="44"/>
    </location>
    <ligand>
        <name>substrate</name>
    </ligand>
</feature>
<feature type="binding site" evidence="1">
    <location>
        <begin position="71"/>
        <end position="80"/>
    </location>
    <ligand>
        <name>substrate</name>
    </ligand>
</feature>
<feature type="binding site" evidence="1">
    <location>
        <position position="130"/>
    </location>
    <ligand>
        <name>substrate</name>
    </ligand>
</feature>
<feature type="binding site" evidence="1">
    <location>
        <position position="191"/>
    </location>
    <ligand>
        <name>substrate</name>
    </ligand>
</feature>
<feature type="binding site" evidence="1">
    <location>
        <position position="201"/>
    </location>
    <ligand>
        <name>substrate</name>
    </ligand>
</feature>
<feature type="binding site" evidence="1">
    <location>
        <position position="221"/>
    </location>
    <ligand>
        <name>substrate</name>
    </ligand>
</feature>
<feature type="binding site" evidence="1">
    <location>
        <position position="222"/>
    </location>
    <ligand>
        <name>substrate</name>
    </ligand>
</feature>
<dbReference type="EC" id="4.1.1.23" evidence="1"/>
<dbReference type="EMBL" id="AE002098">
    <property type="protein sequence ID" value="AAF41237.1"/>
    <property type="molecule type" value="Genomic_DNA"/>
</dbReference>
<dbReference type="PIR" id="G81154">
    <property type="entry name" value="G81154"/>
</dbReference>
<dbReference type="RefSeq" id="NP_273866.1">
    <property type="nucleotide sequence ID" value="NC_003112.2"/>
</dbReference>
<dbReference type="RefSeq" id="WP_002217549.1">
    <property type="nucleotide sequence ID" value="NC_003112.2"/>
</dbReference>
<dbReference type="SMR" id="Q9K005"/>
<dbReference type="FunCoup" id="Q9K005">
    <property type="interactions" value="348"/>
</dbReference>
<dbReference type="STRING" id="122586.NMB0824"/>
<dbReference type="PaxDb" id="122586-NMB0824"/>
<dbReference type="GeneID" id="93386352"/>
<dbReference type="KEGG" id="nme:NMB0824"/>
<dbReference type="PATRIC" id="fig|122586.8.peg.1035"/>
<dbReference type="HOGENOM" id="CLU_067069_0_0_4"/>
<dbReference type="InParanoid" id="Q9K005"/>
<dbReference type="OrthoDB" id="9806203at2"/>
<dbReference type="UniPathway" id="UPA00070">
    <property type="reaction ID" value="UER00120"/>
</dbReference>
<dbReference type="Proteomes" id="UP000000425">
    <property type="component" value="Chromosome"/>
</dbReference>
<dbReference type="GO" id="GO:0005829">
    <property type="term" value="C:cytosol"/>
    <property type="evidence" value="ECO:0000318"/>
    <property type="project" value="GO_Central"/>
</dbReference>
<dbReference type="GO" id="GO:0004590">
    <property type="term" value="F:orotidine-5'-phosphate decarboxylase activity"/>
    <property type="evidence" value="ECO:0000318"/>
    <property type="project" value="GO_Central"/>
</dbReference>
<dbReference type="GO" id="GO:0006207">
    <property type="term" value="P:'de novo' pyrimidine nucleobase biosynthetic process"/>
    <property type="evidence" value="ECO:0000318"/>
    <property type="project" value="GO_Central"/>
</dbReference>
<dbReference type="GO" id="GO:0044205">
    <property type="term" value="P:'de novo' UMP biosynthetic process"/>
    <property type="evidence" value="ECO:0007669"/>
    <property type="project" value="UniProtKB-UniRule"/>
</dbReference>
<dbReference type="CDD" id="cd04725">
    <property type="entry name" value="OMP_decarboxylase_like"/>
    <property type="match status" value="1"/>
</dbReference>
<dbReference type="FunFam" id="3.20.20.70:FF:000015">
    <property type="entry name" value="Orotidine 5'-phosphate decarboxylase"/>
    <property type="match status" value="1"/>
</dbReference>
<dbReference type="Gene3D" id="3.20.20.70">
    <property type="entry name" value="Aldolase class I"/>
    <property type="match status" value="1"/>
</dbReference>
<dbReference type="HAMAP" id="MF_01200_B">
    <property type="entry name" value="OMPdecase_type1_B"/>
    <property type="match status" value="1"/>
</dbReference>
<dbReference type="InterPro" id="IPR013785">
    <property type="entry name" value="Aldolase_TIM"/>
</dbReference>
<dbReference type="InterPro" id="IPR014732">
    <property type="entry name" value="OMPdecase"/>
</dbReference>
<dbReference type="InterPro" id="IPR018089">
    <property type="entry name" value="OMPdecase_AS"/>
</dbReference>
<dbReference type="InterPro" id="IPR047596">
    <property type="entry name" value="OMPdecase_bac"/>
</dbReference>
<dbReference type="InterPro" id="IPR001754">
    <property type="entry name" value="OMPdeCOase_dom"/>
</dbReference>
<dbReference type="InterPro" id="IPR011060">
    <property type="entry name" value="RibuloseP-bd_barrel"/>
</dbReference>
<dbReference type="NCBIfam" id="NF001273">
    <property type="entry name" value="PRK00230.1"/>
    <property type="match status" value="1"/>
</dbReference>
<dbReference type="NCBIfam" id="TIGR01740">
    <property type="entry name" value="pyrF"/>
    <property type="match status" value="1"/>
</dbReference>
<dbReference type="PANTHER" id="PTHR32119">
    <property type="entry name" value="OROTIDINE 5'-PHOSPHATE DECARBOXYLASE"/>
    <property type="match status" value="1"/>
</dbReference>
<dbReference type="PANTHER" id="PTHR32119:SF2">
    <property type="entry name" value="OROTIDINE 5'-PHOSPHATE DECARBOXYLASE"/>
    <property type="match status" value="1"/>
</dbReference>
<dbReference type="Pfam" id="PF00215">
    <property type="entry name" value="OMPdecase"/>
    <property type="match status" value="1"/>
</dbReference>
<dbReference type="SMART" id="SM00934">
    <property type="entry name" value="OMPdecase"/>
    <property type="match status" value="1"/>
</dbReference>
<dbReference type="SUPFAM" id="SSF51366">
    <property type="entry name" value="Ribulose-phoshate binding barrel"/>
    <property type="match status" value="1"/>
</dbReference>
<dbReference type="PROSITE" id="PS00156">
    <property type="entry name" value="OMPDECASE"/>
    <property type="match status" value="1"/>
</dbReference>
<name>PYRF_NEIMB</name>
<evidence type="ECO:0000255" key="1">
    <source>
        <dbReference type="HAMAP-Rule" id="MF_01200"/>
    </source>
</evidence>
<accession>Q9K005</accession>
<comment type="function">
    <text evidence="1">Catalyzes the decarboxylation of orotidine 5'-monophosphate (OMP) to uridine 5'-monophosphate (UMP).</text>
</comment>
<comment type="catalytic activity">
    <reaction evidence="1">
        <text>orotidine 5'-phosphate + H(+) = UMP + CO2</text>
        <dbReference type="Rhea" id="RHEA:11596"/>
        <dbReference type="ChEBI" id="CHEBI:15378"/>
        <dbReference type="ChEBI" id="CHEBI:16526"/>
        <dbReference type="ChEBI" id="CHEBI:57538"/>
        <dbReference type="ChEBI" id="CHEBI:57865"/>
        <dbReference type="EC" id="4.1.1.23"/>
    </reaction>
</comment>
<comment type="pathway">
    <text evidence="1">Pyrimidine metabolism; UMP biosynthesis via de novo pathway; UMP from orotate: step 2/2.</text>
</comment>
<comment type="subunit">
    <text evidence="1">Homodimer.</text>
</comment>
<comment type="similarity">
    <text evidence="1">Belongs to the OMP decarboxylase family. Type 1 subfamily.</text>
</comment>
<sequence>MNPLISDFQTPQQRTPVIVALDFSNEKDTLGFVRNLDPTLCQIKIGKELFTATGRNLAESLINQGFKLFLDLKYHDIPHTVAQACKVAADMGVWMVDMHASGGRRMMEAAAEAVAGYGTKPLLIGVTVLTSMEQSDLAEIGLNTAPEEQVIRLAKLAQSSGLDGVVCSAQEAAPLRRELGQDFVLVTPGIRLDVAGNNDDQRRIMTPAEALAAGSTYLVMGRPVTQAADPVAVLREVNRVANLEAN</sequence>
<proteinExistence type="inferred from homology"/>
<reference key="1">
    <citation type="journal article" date="2000" name="Science">
        <title>Complete genome sequence of Neisseria meningitidis serogroup B strain MC58.</title>
        <authorList>
            <person name="Tettelin H."/>
            <person name="Saunders N.J."/>
            <person name="Heidelberg J.F."/>
            <person name="Jeffries A.C."/>
            <person name="Nelson K.E."/>
            <person name="Eisen J.A."/>
            <person name="Ketchum K.A."/>
            <person name="Hood D.W."/>
            <person name="Peden J.F."/>
            <person name="Dodson R.J."/>
            <person name="Nelson W.C."/>
            <person name="Gwinn M.L."/>
            <person name="DeBoy R.T."/>
            <person name="Peterson J.D."/>
            <person name="Hickey E.K."/>
            <person name="Haft D.H."/>
            <person name="Salzberg S.L."/>
            <person name="White O."/>
            <person name="Fleischmann R.D."/>
            <person name="Dougherty B.A."/>
            <person name="Mason T.M."/>
            <person name="Ciecko A."/>
            <person name="Parksey D.S."/>
            <person name="Blair E."/>
            <person name="Cittone H."/>
            <person name="Clark E.B."/>
            <person name="Cotton M.D."/>
            <person name="Utterback T.R."/>
            <person name="Khouri H.M."/>
            <person name="Qin H."/>
            <person name="Vamathevan J.J."/>
            <person name="Gill J."/>
            <person name="Scarlato V."/>
            <person name="Masignani V."/>
            <person name="Pizza M."/>
            <person name="Grandi G."/>
            <person name="Sun L."/>
            <person name="Smith H.O."/>
            <person name="Fraser C.M."/>
            <person name="Moxon E.R."/>
            <person name="Rappuoli R."/>
            <person name="Venter J.C."/>
        </authorList>
    </citation>
    <scope>NUCLEOTIDE SEQUENCE [LARGE SCALE GENOMIC DNA]</scope>
    <source>
        <strain>ATCC BAA-335 / MC58</strain>
    </source>
</reference>
<gene>
    <name evidence="1" type="primary">pyrF</name>
    <name type="ordered locus">NMB0824</name>
</gene>
<protein>
    <recommendedName>
        <fullName evidence="1">Orotidine 5'-phosphate decarboxylase</fullName>
        <ecNumber evidence="1">4.1.1.23</ecNumber>
    </recommendedName>
    <alternativeName>
        <fullName evidence="1">OMP decarboxylase</fullName>
        <shortName evidence="1">OMPDCase</shortName>
        <shortName evidence="1">OMPdecase</shortName>
    </alternativeName>
</protein>
<organism>
    <name type="scientific">Neisseria meningitidis serogroup B (strain ATCC BAA-335 / MC58)</name>
    <dbReference type="NCBI Taxonomy" id="122586"/>
    <lineage>
        <taxon>Bacteria</taxon>
        <taxon>Pseudomonadati</taxon>
        <taxon>Pseudomonadota</taxon>
        <taxon>Betaproteobacteria</taxon>
        <taxon>Neisseriales</taxon>
        <taxon>Neisseriaceae</taxon>
        <taxon>Neisseria</taxon>
    </lineage>
</organism>
<keyword id="KW-0210">Decarboxylase</keyword>
<keyword id="KW-0456">Lyase</keyword>
<keyword id="KW-0665">Pyrimidine biosynthesis</keyword>
<keyword id="KW-1185">Reference proteome</keyword>